<protein>
    <recommendedName>
        <fullName evidence="5">Dolabella-3,7-dien-18-ol synthase TPS06</fullName>
        <ecNumber evidence="3">4.2.3.167</ecNumber>
    </recommendedName>
    <alternativeName>
        <fullName evidence="4">Terpenoid synthase 6</fullName>
        <shortName evidence="4">AtTPS06</shortName>
    </alternativeName>
</protein>
<name>TPS06_ARATH</name>
<keyword id="KW-0963">Cytoplasm</keyword>
<keyword id="KW-0456">Lyase</keyword>
<keyword id="KW-0460">Magnesium</keyword>
<keyword id="KW-0464">Manganese</keyword>
<keyword id="KW-0479">Metal-binding</keyword>
<keyword id="KW-1185">Reference proteome</keyword>
<proteinExistence type="evidence at transcript level"/>
<dbReference type="EC" id="4.2.3.167" evidence="3"/>
<dbReference type="EMBL" id="AC002062">
    <property type="protein sequence ID" value="AAB61105.1"/>
    <property type="status" value="ALT_SEQ"/>
    <property type="molecule type" value="Genomic_DNA"/>
</dbReference>
<dbReference type="EMBL" id="CP002684">
    <property type="protein sequence ID" value="AEE35014.1"/>
    <property type="molecule type" value="Genomic_DNA"/>
</dbReference>
<dbReference type="EMBL" id="AF497486">
    <property type="protein sequence ID" value="AAO85534.1"/>
    <property type="molecule type" value="mRNA"/>
</dbReference>
<dbReference type="PIR" id="E96723">
    <property type="entry name" value="E96723"/>
</dbReference>
<dbReference type="RefSeq" id="NP_177165.1">
    <property type="nucleotide sequence ID" value="NM_105676.2"/>
</dbReference>
<dbReference type="SMR" id="Q84UU9"/>
<dbReference type="FunCoup" id="Q84UU9">
    <property type="interactions" value="22"/>
</dbReference>
<dbReference type="STRING" id="3702.Q84UU9"/>
<dbReference type="PaxDb" id="3702-AT1G70080.1"/>
<dbReference type="ProteomicsDB" id="245210"/>
<dbReference type="EnsemblPlants" id="AT1G70080.1">
    <property type="protein sequence ID" value="AT1G70080.1"/>
    <property type="gene ID" value="AT1G70080"/>
</dbReference>
<dbReference type="GeneID" id="843344"/>
<dbReference type="Gramene" id="AT1G70080.1">
    <property type="protein sequence ID" value="AT1G70080.1"/>
    <property type="gene ID" value="AT1G70080"/>
</dbReference>
<dbReference type="KEGG" id="ath:AT1G70080"/>
<dbReference type="Araport" id="AT1G70080"/>
<dbReference type="TAIR" id="AT1G70080">
    <property type="gene designation" value="TPS6"/>
</dbReference>
<dbReference type="eggNOG" id="ENOG502QUCN">
    <property type="taxonomic scope" value="Eukaryota"/>
</dbReference>
<dbReference type="HOGENOM" id="CLU_003125_7_2_1"/>
<dbReference type="InParanoid" id="Q84UU9"/>
<dbReference type="OMA" id="MQEAQWT"/>
<dbReference type="PhylomeDB" id="Q84UU9"/>
<dbReference type="BioCyc" id="ARA:AT1G70080-MONOMER"/>
<dbReference type="UniPathway" id="UPA00213"/>
<dbReference type="PRO" id="PR:Q84UU9"/>
<dbReference type="Proteomes" id="UP000006548">
    <property type="component" value="Chromosome 1"/>
</dbReference>
<dbReference type="ExpressionAtlas" id="Q84UU9">
    <property type="expression patterns" value="baseline and differential"/>
</dbReference>
<dbReference type="GO" id="GO:0005737">
    <property type="term" value="C:cytoplasm"/>
    <property type="evidence" value="ECO:0007669"/>
    <property type="project" value="UniProtKB-SubCell"/>
</dbReference>
<dbReference type="GO" id="GO:0000287">
    <property type="term" value="F:magnesium ion binding"/>
    <property type="evidence" value="ECO:0007669"/>
    <property type="project" value="InterPro"/>
</dbReference>
<dbReference type="GO" id="GO:0010333">
    <property type="term" value="F:terpene synthase activity"/>
    <property type="evidence" value="ECO:0000314"/>
    <property type="project" value="TAIR"/>
</dbReference>
<dbReference type="GO" id="GO:0016102">
    <property type="term" value="P:diterpenoid biosynthetic process"/>
    <property type="evidence" value="ECO:0007669"/>
    <property type="project" value="InterPro"/>
</dbReference>
<dbReference type="GO" id="GO:0016114">
    <property type="term" value="P:terpenoid biosynthetic process"/>
    <property type="evidence" value="ECO:0000314"/>
    <property type="project" value="UniProtKB"/>
</dbReference>
<dbReference type="CDD" id="cd00684">
    <property type="entry name" value="Terpene_cyclase_plant_C1"/>
    <property type="match status" value="1"/>
</dbReference>
<dbReference type="FunFam" id="1.10.600.10:FF:000007">
    <property type="entry name" value="Isoprene synthase, chloroplastic"/>
    <property type="match status" value="1"/>
</dbReference>
<dbReference type="FunFam" id="1.50.10.130:FF:000001">
    <property type="entry name" value="Isoprene synthase, chloroplastic"/>
    <property type="match status" value="1"/>
</dbReference>
<dbReference type="Gene3D" id="1.10.600.10">
    <property type="entry name" value="Farnesyl Diphosphate Synthase"/>
    <property type="match status" value="1"/>
</dbReference>
<dbReference type="Gene3D" id="1.50.10.130">
    <property type="entry name" value="Terpene synthase, N-terminal domain"/>
    <property type="match status" value="1"/>
</dbReference>
<dbReference type="InterPro" id="IPR008949">
    <property type="entry name" value="Isoprenoid_synthase_dom_sf"/>
</dbReference>
<dbReference type="InterPro" id="IPR034741">
    <property type="entry name" value="Terpene_cyclase-like_1_C"/>
</dbReference>
<dbReference type="InterPro" id="IPR044814">
    <property type="entry name" value="Terpene_cyclase_plant_C1"/>
</dbReference>
<dbReference type="InterPro" id="IPR001906">
    <property type="entry name" value="Terpene_synth_N"/>
</dbReference>
<dbReference type="InterPro" id="IPR036965">
    <property type="entry name" value="Terpene_synth_N_sf"/>
</dbReference>
<dbReference type="InterPro" id="IPR050148">
    <property type="entry name" value="Terpene_synthase-like"/>
</dbReference>
<dbReference type="InterPro" id="IPR005630">
    <property type="entry name" value="Terpene_synthase_metal-bd"/>
</dbReference>
<dbReference type="InterPro" id="IPR008930">
    <property type="entry name" value="Terpenoid_cyclase/PrenylTrfase"/>
</dbReference>
<dbReference type="PANTHER" id="PTHR31225">
    <property type="entry name" value="OS04G0344100 PROTEIN-RELATED"/>
    <property type="match status" value="1"/>
</dbReference>
<dbReference type="PANTHER" id="PTHR31225:SF242">
    <property type="entry name" value="TERPENOID SYNTHASE 9"/>
    <property type="match status" value="1"/>
</dbReference>
<dbReference type="Pfam" id="PF01397">
    <property type="entry name" value="Terpene_synth"/>
    <property type="match status" value="1"/>
</dbReference>
<dbReference type="Pfam" id="PF03936">
    <property type="entry name" value="Terpene_synth_C"/>
    <property type="match status" value="1"/>
</dbReference>
<dbReference type="SFLD" id="SFLDS00005">
    <property type="entry name" value="Isoprenoid_Synthase_Type_I"/>
    <property type="match status" value="1"/>
</dbReference>
<dbReference type="SFLD" id="SFLDG01019">
    <property type="entry name" value="Terpene_Cyclase_Like_1_C_Termi"/>
    <property type="match status" value="1"/>
</dbReference>
<dbReference type="SUPFAM" id="SSF48239">
    <property type="entry name" value="Terpenoid cyclases/Protein prenyltransferases"/>
    <property type="match status" value="1"/>
</dbReference>
<dbReference type="SUPFAM" id="SSF48576">
    <property type="entry name" value="Terpenoid synthases"/>
    <property type="match status" value="1"/>
</dbReference>
<comment type="function">
    <text evidence="3">Involved in terpene biosynthesis in roots. Possesses sesquiterpene (C15) synthase activity and diterpene (C20) synthase activity in vitro. Possesses dolabella-3,7-dien-18-ol synthase activity in vitro. Catalyzes the formation of dolabella-3,7-dien-18-ol from geranylgeranyl diphosphate.</text>
</comment>
<comment type="catalytic activity">
    <reaction evidence="3">
        <text>(2E,6E,10E)-geranylgeranyl diphosphate + H2O = (3E,7E)-dolabella-3,7-dien-18-ol + diphosphate</text>
        <dbReference type="Rhea" id="RHEA:16345"/>
        <dbReference type="ChEBI" id="CHEBI:15377"/>
        <dbReference type="ChEBI" id="CHEBI:33019"/>
        <dbReference type="ChEBI" id="CHEBI:58756"/>
        <dbReference type="ChEBI" id="CHEBI:137565"/>
        <dbReference type="EC" id="4.2.3.167"/>
    </reaction>
</comment>
<comment type="cofactor">
    <cofactor evidence="1">
        <name>Mg(2+)</name>
        <dbReference type="ChEBI" id="CHEBI:18420"/>
    </cofactor>
    <cofactor evidence="1">
        <name>Mn(2+)</name>
        <dbReference type="ChEBI" id="CHEBI:29035"/>
    </cofactor>
    <text evidence="1">Binds 3 Mg(2+) or Mn(2+) ions per subunit.</text>
</comment>
<comment type="pathway">
    <text evidence="5">Secondary metabolite biosynthesis; terpenoid biosynthesis.</text>
</comment>
<comment type="subcellular location">
    <subcellularLocation>
        <location evidence="5">Cytoplasm</location>
    </subcellularLocation>
</comment>
<comment type="tissue specificity">
    <text evidence="2">Predominantly expressed in flowers but also in stems, siliques, roots and leaves.</text>
</comment>
<comment type="domain">
    <text evidence="5">The Asp-Asp-Xaa-Xaa-Asp/Glu (DDXXD/E) motif is important for the catalytic activity, presumably through binding to Mg(2+).</text>
</comment>
<comment type="similarity">
    <text evidence="5">Belongs to the terpene synthase family. Tpsa subfamily.</text>
</comment>
<comment type="sequence caution" evidence="5">
    <conflict type="erroneous gene model prediction">
        <sequence resource="EMBL-CDS" id="AAB61105"/>
    </conflict>
</comment>
<feature type="chain" id="PRO_0000403702" description="Dolabella-3,7-dien-18-ol synthase TPS06">
    <location>
        <begin position="1"/>
        <end position="611"/>
    </location>
</feature>
<feature type="short sequence motif" description="DDXXD motif; degenerate" evidence="5">
    <location>
        <begin position="363"/>
        <end position="367"/>
    </location>
</feature>
<feature type="binding site" evidence="1">
    <location>
        <position position="363"/>
    </location>
    <ligand>
        <name>Mg(2+)</name>
        <dbReference type="ChEBI" id="CHEBI:18420"/>
        <label>1</label>
    </ligand>
</feature>
<feature type="binding site" evidence="1">
    <location>
        <position position="363"/>
    </location>
    <ligand>
        <name>Mg(2+)</name>
        <dbReference type="ChEBI" id="CHEBI:18420"/>
        <label>2</label>
    </ligand>
</feature>
<feature type="binding site" evidence="1">
    <location>
        <position position="367"/>
    </location>
    <ligand>
        <name>Mg(2+)</name>
        <dbReference type="ChEBI" id="CHEBI:18420"/>
        <label>1</label>
    </ligand>
</feature>
<feature type="binding site" evidence="1">
    <location>
        <position position="367"/>
    </location>
    <ligand>
        <name>Mg(2+)</name>
        <dbReference type="ChEBI" id="CHEBI:18420"/>
        <label>2</label>
    </ligand>
</feature>
<feature type="binding site" evidence="1">
    <location>
        <position position="507"/>
    </location>
    <ligand>
        <name>Mg(2+)</name>
        <dbReference type="ChEBI" id="CHEBI:18420"/>
        <label>3</label>
    </ligand>
</feature>
<feature type="binding site" evidence="1">
    <location>
        <position position="511"/>
    </location>
    <ligand>
        <name>Mg(2+)</name>
        <dbReference type="ChEBI" id="CHEBI:18420"/>
        <label>3</label>
    </ligand>
</feature>
<feature type="binding site" evidence="1">
    <location>
        <position position="515"/>
    </location>
    <ligand>
        <name>Mg(2+)</name>
        <dbReference type="ChEBI" id="CHEBI:18420"/>
        <label>3</label>
    </ligand>
</feature>
<feature type="sequence conflict" description="In Ref. 3; AAO85534." evidence="5" ref="3">
    <original>F</original>
    <variation>S</variation>
    <location>
        <position position="11"/>
    </location>
</feature>
<feature type="sequence conflict" description="In Ref. 3; AAO85534." evidence="5" ref="3">
    <original>K</original>
    <variation>R</variation>
    <location>
        <position position="138"/>
    </location>
</feature>
<feature type="sequence conflict" description="In Ref. 3; AAO85534." evidence="5" ref="3">
    <original>A</original>
    <variation>V</variation>
    <location>
        <position position="146"/>
    </location>
</feature>
<feature type="sequence conflict" description="In Ref. 3; AAO85534." evidence="5" ref="3">
    <original>M</original>
    <variation>I</variation>
    <location>
        <position position="153"/>
    </location>
</feature>
<feature type="sequence conflict" description="In Ref. 3; AAO85534." evidence="5" ref="3">
    <original>I</original>
    <variation>V</variation>
    <location>
        <position position="167"/>
    </location>
</feature>
<feature type="sequence conflict" description="In Ref. 3; AAO85534." evidence="5" ref="3">
    <original>V</original>
    <variation>G</variation>
    <location>
        <position position="359"/>
    </location>
</feature>
<organism>
    <name type="scientific">Arabidopsis thaliana</name>
    <name type="common">Mouse-ear cress</name>
    <dbReference type="NCBI Taxonomy" id="3702"/>
    <lineage>
        <taxon>Eukaryota</taxon>
        <taxon>Viridiplantae</taxon>
        <taxon>Streptophyta</taxon>
        <taxon>Embryophyta</taxon>
        <taxon>Tracheophyta</taxon>
        <taxon>Spermatophyta</taxon>
        <taxon>Magnoliopsida</taxon>
        <taxon>eudicotyledons</taxon>
        <taxon>Gunneridae</taxon>
        <taxon>Pentapetalae</taxon>
        <taxon>rosids</taxon>
        <taxon>malvids</taxon>
        <taxon>Brassicales</taxon>
        <taxon>Brassicaceae</taxon>
        <taxon>Camelineae</taxon>
        <taxon>Arabidopsis</taxon>
    </lineage>
</organism>
<accession>Q84UU9</accession>
<accession>O04537</accession>
<gene>
    <name evidence="4" type="primary">TPS06</name>
    <name evidence="6" type="ordered locus">At1g70080</name>
    <name evidence="7" type="ORF">F20P5.19</name>
</gene>
<reference key="1">
    <citation type="journal article" date="2000" name="Nature">
        <title>Sequence and analysis of chromosome 1 of the plant Arabidopsis thaliana.</title>
        <authorList>
            <person name="Theologis A."/>
            <person name="Ecker J.R."/>
            <person name="Palm C.J."/>
            <person name="Federspiel N.A."/>
            <person name="Kaul S."/>
            <person name="White O."/>
            <person name="Alonso J."/>
            <person name="Altafi H."/>
            <person name="Araujo R."/>
            <person name="Bowman C.L."/>
            <person name="Brooks S.Y."/>
            <person name="Buehler E."/>
            <person name="Chan A."/>
            <person name="Chao Q."/>
            <person name="Chen H."/>
            <person name="Cheuk R.F."/>
            <person name="Chin C.W."/>
            <person name="Chung M.K."/>
            <person name="Conn L."/>
            <person name="Conway A.B."/>
            <person name="Conway A.R."/>
            <person name="Creasy T.H."/>
            <person name="Dewar K."/>
            <person name="Dunn P."/>
            <person name="Etgu P."/>
            <person name="Feldblyum T.V."/>
            <person name="Feng J.-D."/>
            <person name="Fong B."/>
            <person name="Fujii C.Y."/>
            <person name="Gill J.E."/>
            <person name="Goldsmith A.D."/>
            <person name="Haas B."/>
            <person name="Hansen N.F."/>
            <person name="Hughes B."/>
            <person name="Huizar L."/>
            <person name="Hunter J.L."/>
            <person name="Jenkins J."/>
            <person name="Johnson-Hopson C."/>
            <person name="Khan S."/>
            <person name="Khaykin E."/>
            <person name="Kim C.J."/>
            <person name="Koo H.L."/>
            <person name="Kremenetskaia I."/>
            <person name="Kurtz D.B."/>
            <person name="Kwan A."/>
            <person name="Lam B."/>
            <person name="Langin-Hooper S."/>
            <person name="Lee A."/>
            <person name="Lee J.M."/>
            <person name="Lenz C.A."/>
            <person name="Li J.H."/>
            <person name="Li Y.-P."/>
            <person name="Lin X."/>
            <person name="Liu S.X."/>
            <person name="Liu Z.A."/>
            <person name="Luros J.S."/>
            <person name="Maiti R."/>
            <person name="Marziali A."/>
            <person name="Militscher J."/>
            <person name="Miranda M."/>
            <person name="Nguyen M."/>
            <person name="Nierman W.C."/>
            <person name="Osborne B.I."/>
            <person name="Pai G."/>
            <person name="Peterson J."/>
            <person name="Pham P.K."/>
            <person name="Rizzo M."/>
            <person name="Rooney T."/>
            <person name="Rowley D."/>
            <person name="Sakano H."/>
            <person name="Salzberg S.L."/>
            <person name="Schwartz J.R."/>
            <person name="Shinn P."/>
            <person name="Southwick A.M."/>
            <person name="Sun H."/>
            <person name="Tallon L.J."/>
            <person name="Tambunga G."/>
            <person name="Toriumi M.J."/>
            <person name="Town C.D."/>
            <person name="Utterback T."/>
            <person name="Van Aken S."/>
            <person name="Vaysberg M."/>
            <person name="Vysotskaia V.S."/>
            <person name="Walker M."/>
            <person name="Wu D."/>
            <person name="Yu G."/>
            <person name="Fraser C.M."/>
            <person name="Venter J.C."/>
            <person name="Davis R.W."/>
        </authorList>
    </citation>
    <scope>NUCLEOTIDE SEQUENCE [LARGE SCALE GENOMIC DNA]</scope>
    <source>
        <strain>cv. Columbia</strain>
    </source>
</reference>
<reference key="2">
    <citation type="journal article" date="2017" name="Plant J.">
        <title>Araport11: a complete reannotation of the Arabidopsis thaliana reference genome.</title>
        <authorList>
            <person name="Cheng C.Y."/>
            <person name="Krishnakumar V."/>
            <person name="Chan A.P."/>
            <person name="Thibaud-Nissen F."/>
            <person name="Schobel S."/>
            <person name="Town C.D."/>
        </authorList>
    </citation>
    <scope>GENOME REANNOTATION</scope>
    <source>
        <strain>cv. Columbia</strain>
    </source>
</reference>
<reference key="3">
    <citation type="journal article" date="2003" name="Science">
        <title>Empirical analysis of transcriptional activity in the Arabidopsis genome.</title>
        <authorList>
            <person name="Yamada K."/>
            <person name="Lim J."/>
            <person name="Dale J.M."/>
            <person name="Chen H."/>
            <person name="Shinn P."/>
            <person name="Palm C.J."/>
            <person name="Southwick A.M."/>
            <person name="Wu H.C."/>
            <person name="Kim C.J."/>
            <person name="Nguyen M."/>
            <person name="Pham P.K."/>
            <person name="Cheuk R.F."/>
            <person name="Karlin-Newmann G."/>
            <person name="Liu S.X."/>
            <person name="Lam B."/>
            <person name="Sakano H."/>
            <person name="Wu T."/>
            <person name="Yu G."/>
            <person name="Miranda M."/>
            <person name="Quach H.L."/>
            <person name="Tripp M."/>
            <person name="Chang C.H."/>
            <person name="Lee J.M."/>
            <person name="Toriumi M.J."/>
            <person name="Chan M.M."/>
            <person name="Tang C.C."/>
            <person name="Onodera C.S."/>
            <person name="Deng J.M."/>
            <person name="Akiyama K."/>
            <person name="Ansari Y."/>
            <person name="Arakawa T."/>
            <person name="Banh J."/>
            <person name="Banno F."/>
            <person name="Bowser L."/>
            <person name="Brooks S.Y."/>
            <person name="Carninci P."/>
            <person name="Chao Q."/>
            <person name="Choy N."/>
            <person name="Enju A."/>
            <person name="Goldsmith A.D."/>
            <person name="Gurjal M."/>
            <person name="Hansen N.F."/>
            <person name="Hayashizaki Y."/>
            <person name="Johnson-Hopson C."/>
            <person name="Hsuan V.W."/>
            <person name="Iida K."/>
            <person name="Karnes M."/>
            <person name="Khan S."/>
            <person name="Koesema E."/>
            <person name="Ishida J."/>
            <person name="Jiang P.X."/>
            <person name="Jones T."/>
            <person name="Kawai J."/>
            <person name="Kamiya A."/>
            <person name="Meyers C."/>
            <person name="Nakajima M."/>
            <person name="Narusaka M."/>
            <person name="Seki M."/>
            <person name="Sakurai T."/>
            <person name="Satou M."/>
            <person name="Tamse R."/>
            <person name="Vaysberg M."/>
            <person name="Wallender E.K."/>
            <person name="Wong C."/>
            <person name="Yamamura Y."/>
            <person name="Yuan S."/>
            <person name="Shinozaki K."/>
            <person name="Davis R.W."/>
            <person name="Theologis A."/>
            <person name="Ecker J.R."/>
        </authorList>
    </citation>
    <scope>NUCLEOTIDE SEQUENCE [LARGE SCALE MRNA]</scope>
    <source>
        <strain>cv. Columbia</strain>
    </source>
</reference>
<reference key="4">
    <citation type="journal article" date="2002" name="Mol. Genet. Genomics">
        <title>Genomic analysis of the terpenoid synthase (AtTPS) gene family of Arabidopsis thaliana.</title>
        <authorList>
            <person name="Aubourg S."/>
            <person name="Lecharny A."/>
            <person name="Bohlmann J."/>
        </authorList>
    </citation>
    <scope>GENE FAMILY</scope>
    <scope>NOMENCLATURE</scope>
</reference>
<reference key="5">
    <citation type="journal article" date="2003" name="Plant Cell">
        <title>Biosynthesis and emission of terpenoid volatiles from Arabidopsis flowers.</title>
        <authorList>
            <person name="Chen F."/>
            <person name="Tholl D."/>
            <person name="D'Auria J.C."/>
            <person name="Farooq A."/>
            <person name="Pichersky E."/>
            <person name="Gershenzon J."/>
        </authorList>
    </citation>
    <scope>TISSUE SPECIFICITY</scope>
</reference>
<reference key="6">
    <citation type="journal article" date="2003" name="Plant Mol. Biol.">
        <title>Genome organization in Arabidopsis thaliana: a survey for genes involved in isoprenoid and chlorophyll metabolism.</title>
        <authorList>
            <person name="Lange B.M."/>
            <person name="Ghassemian M."/>
        </authorList>
    </citation>
    <scope>GENE FAMILY</scope>
</reference>
<reference key="7">
    <citation type="journal article" date="2016" name="Front. Plant Sci.">
        <title>Identification of a dolabellane type diterpene synthase and other root-expressed diterpene synthases in Arabidopsis.</title>
        <authorList>
            <person name="Wang Q."/>
            <person name="Jia M."/>
            <person name="Huh J.H."/>
            <person name="Muchlinski A."/>
            <person name="Peters R.J."/>
            <person name="Tholl D."/>
        </authorList>
    </citation>
    <scope>FUNCTION</scope>
    <source>
        <strain>cv. Cvi-0</strain>
    </source>
</reference>
<evidence type="ECO:0000250" key="1">
    <source>
        <dbReference type="UniProtKB" id="Q40577"/>
    </source>
</evidence>
<evidence type="ECO:0000269" key="2">
    <source>
    </source>
</evidence>
<evidence type="ECO:0000269" key="3">
    <source>
    </source>
</evidence>
<evidence type="ECO:0000303" key="4">
    <source>
    </source>
</evidence>
<evidence type="ECO:0000305" key="5"/>
<evidence type="ECO:0000312" key="6">
    <source>
        <dbReference type="Araport" id="AT1G70080"/>
    </source>
</evidence>
<evidence type="ECO:0000312" key="7">
    <source>
        <dbReference type="EMBL" id="AAB61105.1"/>
    </source>
</evidence>
<sequence length="611" mass="71112">MEAITKYGSYFNVRFLSRLCWRLNLSSSYHYPLLKSSLSFSRFQSPKKLCLVRATTNPTDDNSTTRSFTPHPPSLWGHHFLSASVNQTEMDDLWRQIEALKPIVNAMLLPCNGADAKKITCFIHTLVSLGVSYHFEEKIVEFLKDAFENIEDMIIDCKEDDLYTVSIIFRVFRLYGHYITPDIFNRFKGDDGNFKKCLNDDVRGMLSFYEASHFGTTTEDILEEAMSFTQKHLELFLVGEKAKHYPHITKLIQAALYIPQNFNLEILVAREYIDFYELETDHNEMLLKLAKLNFRFLQLQYIQDLKTLTTWWKELDLVSKIPVYFRERLAEPYFWATGIYYEPQYSAARIMLAKSIILVDIVDNTFDVYGTIDEVKSLVQAIERWDSDAVDVLPDYLKVVFRTTFDLFKELEEYVSSEARSFTMQYAYEQLRILMKGYLQEAEWSNRGHLPSHEEYIEVGVASTAGEVLLAMTFIPMGDAAGVGVYEWLRSRPKLTHALFVKSRLRDDIATYKEEMKRGDVCNGINCYTKQHKVSEEEACIEFEKKTNHMSKVMNEEFLKAAKFIPLHILRPVLNYGRLADVCYKYGDGYTFAGEKIKDYITSLYVDLITL</sequence>